<name>SET5_YARLI</name>
<dbReference type="EC" id="2.1.1.-" evidence="1"/>
<dbReference type="EMBL" id="CR382130">
    <property type="protein sequence ID" value="CAG80903.1"/>
    <property type="molecule type" value="Genomic_DNA"/>
</dbReference>
<dbReference type="RefSeq" id="XP_502715.1">
    <property type="nucleotide sequence ID" value="XM_502715.1"/>
</dbReference>
<dbReference type="FunCoup" id="Q6C9E7">
    <property type="interactions" value="695"/>
</dbReference>
<dbReference type="STRING" id="284591.Q6C9E7"/>
<dbReference type="EnsemblFungi" id="CAG80903">
    <property type="protein sequence ID" value="CAG80903"/>
    <property type="gene ID" value="YALI0_D11792g"/>
</dbReference>
<dbReference type="KEGG" id="yli:2910600"/>
<dbReference type="VEuPathDB" id="FungiDB:YALI0_D11792g"/>
<dbReference type="HOGENOM" id="CLU_031650_0_0_1"/>
<dbReference type="InParanoid" id="Q6C9E7"/>
<dbReference type="OMA" id="LMAMYQQ"/>
<dbReference type="OrthoDB" id="88669at4891"/>
<dbReference type="Proteomes" id="UP000001300">
    <property type="component" value="Chromosome D"/>
</dbReference>
<dbReference type="GO" id="GO:0005694">
    <property type="term" value="C:chromosome"/>
    <property type="evidence" value="ECO:0007669"/>
    <property type="project" value="UniProtKB-SubCell"/>
</dbReference>
<dbReference type="GO" id="GO:0005737">
    <property type="term" value="C:cytoplasm"/>
    <property type="evidence" value="ECO:0007669"/>
    <property type="project" value="UniProtKB-SubCell"/>
</dbReference>
<dbReference type="GO" id="GO:0005634">
    <property type="term" value="C:nucleus"/>
    <property type="evidence" value="ECO:0007669"/>
    <property type="project" value="UniProtKB-SubCell"/>
</dbReference>
<dbReference type="GO" id="GO:0042799">
    <property type="term" value="F:histone H4K20 methyltransferase activity"/>
    <property type="evidence" value="ECO:0000318"/>
    <property type="project" value="GO_Central"/>
</dbReference>
<dbReference type="GO" id="GO:0032259">
    <property type="term" value="P:methylation"/>
    <property type="evidence" value="ECO:0007669"/>
    <property type="project" value="UniProtKB-KW"/>
</dbReference>
<dbReference type="GO" id="GO:0045814">
    <property type="term" value="P:negative regulation of gene expression, epigenetic"/>
    <property type="evidence" value="ECO:0000318"/>
    <property type="project" value="GO_Central"/>
</dbReference>
<dbReference type="CDD" id="cd20071">
    <property type="entry name" value="SET_SMYD"/>
    <property type="match status" value="1"/>
</dbReference>
<dbReference type="Gene3D" id="1.10.220.160">
    <property type="match status" value="1"/>
</dbReference>
<dbReference type="Gene3D" id="6.10.140.2220">
    <property type="match status" value="1"/>
</dbReference>
<dbReference type="Gene3D" id="2.170.270.10">
    <property type="entry name" value="SET domain"/>
    <property type="match status" value="1"/>
</dbReference>
<dbReference type="InterPro" id="IPR001214">
    <property type="entry name" value="SET_dom"/>
</dbReference>
<dbReference type="InterPro" id="IPR046341">
    <property type="entry name" value="SET_dom_sf"/>
</dbReference>
<dbReference type="PANTHER" id="PTHR46402:SF2">
    <property type="entry name" value="HISTONE-LYSINE N-TRIMETHYLTRANSFERASE SMYD5"/>
    <property type="match status" value="1"/>
</dbReference>
<dbReference type="PANTHER" id="PTHR46402">
    <property type="entry name" value="SET AND MYND DOMAIN-CONTAINING PROTEIN 5"/>
    <property type="match status" value="1"/>
</dbReference>
<dbReference type="Pfam" id="PF00856">
    <property type="entry name" value="SET"/>
    <property type="match status" value="1"/>
</dbReference>
<dbReference type="SUPFAM" id="SSF82199">
    <property type="entry name" value="SET domain"/>
    <property type="match status" value="1"/>
</dbReference>
<dbReference type="PROSITE" id="PS50280">
    <property type="entry name" value="SET"/>
    <property type="match status" value="1"/>
</dbReference>
<protein>
    <recommendedName>
        <fullName>Histone-lysine N-methyltransferase SET5</fullName>
        <ecNumber evidence="1">2.1.1.-</ecNumber>
    </recommendedName>
    <alternativeName>
        <fullName>SET domain-containing protein 5</fullName>
    </alternativeName>
</protein>
<comment type="function">
    <text evidence="1">Histone methyltransferase that monomethylates 'Lys-5', 'Lys-8' and 'Lys-12' of histone H4 (H4K5me1, H4K8me1 and H4K12me1, respectively), thereby controlling gene expression and remodeling chromatin structures.</text>
</comment>
<comment type="catalytic activity">
    <reaction evidence="1">
        <text>L-lysyl-[histone] + S-adenosyl-L-methionine = N(6)-methyl-L-lysyl-[histone] + S-adenosyl-L-homocysteine + H(+)</text>
        <dbReference type="Rhea" id="RHEA:10024"/>
        <dbReference type="Rhea" id="RHEA-COMP:9845"/>
        <dbReference type="Rhea" id="RHEA-COMP:9846"/>
        <dbReference type="ChEBI" id="CHEBI:15378"/>
        <dbReference type="ChEBI" id="CHEBI:29969"/>
        <dbReference type="ChEBI" id="CHEBI:57856"/>
        <dbReference type="ChEBI" id="CHEBI:59789"/>
        <dbReference type="ChEBI" id="CHEBI:61929"/>
    </reaction>
    <physiologicalReaction direction="left-to-right" evidence="1">
        <dbReference type="Rhea" id="RHEA:10025"/>
    </physiologicalReaction>
</comment>
<comment type="subcellular location">
    <subcellularLocation>
        <location evidence="1">Nucleus</location>
    </subcellularLocation>
    <subcellularLocation>
        <location evidence="1">Chromosome</location>
    </subcellularLocation>
    <subcellularLocation>
        <location evidence="1">Cytoplasm</location>
    </subcellularLocation>
</comment>
<comment type="similarity">
    <text evidence="2">Belongs to the class V-like SAM-binding methyltransferase superfamily. Histone-lysine methyltransferase family. SET5 subfamily.</text>
</comment>
<proteinExistence type="inferred from homology"/>
<reference key="1">
    <citation type="journal article" date="2004" name="Nature">
        <title>Genome evolution in yeasts.</title>
        <authorList>
            <person name="Dujon B."/>
            <person name="Sherman D."/>
            <person name="Fischer G."/>
            <person name="Durrens P."/>
            <person name="Casaregola S."/>
            <person name="Lafontaine I."/>
            <person name="de Montigny J."/>
            <person name="Marck C."/>
            <person name="Neuveglise C."/>
            <person name="Talla E."/>
            <person name="Goffard N."/>
            <person name="Frangeul L."/>
            <person name="Aigle M."/>
            <person name="Anthouard V."/>
            <person name="Babour A."/>
            <person name="Barbe V."/>
            <person name="Barnay S."/>
            <person name="Blanchin S."/>
            <person name="Beckerich J.-M."/>
            <person name="Beyne E."/>
            <person name="Bleykasten C."/>
            <person name="Boisrame A."/>
            <person name="Boyer J."/>
            <person name="Cattolico L."/>
            <person name="Confanioleri F."/>
            <person name="de Daruvar A."/>
            <person name="Despons L."/>
            <person name="Fabre E."/>
            <person name="Fairhead C."/>
            <person name="Ferry-Dumazet H."/>
            <person name="Groppi A."/>
            <person name="Hantraye F."/>
            <person name="Hennequin C."/>
            <person name="Jauniaux N."/>
            <person name="Joyet P."/>
            <person name="Kachouri R."/>
            <person name="Kerrest A."/>
            <person name="Koszul R."/>
            <person name="Lemaire M."/>
            <person name="Lesur I."/>
            <person name="Ma L."/>
            <person name="Muller H."/>
            <person name="Nicaud J.-M."/>
            <person name="Nikolski M."/>
            <person name="Oztas S."/>
            <person name="Ozier-Kalogeropoulos O."/>
            <person name="Pellenz S."/>
            <person name="Potier S."/>
            <person name="Richard G.-F."/>
            <person name="Straub M.-L."/>
            <person name="Suleau A."/>
            <person name="Swennen D."/>
            <person name="Tekaia F."/>
            <person name="Wesolowski-Louvel M."/>
            <person name="Westhof E."/>
            <person name="Wirth B."/>
            <person name="Zeniou-Meyer M."/>
            <person name="Zivanovic Y."/>
            <person name="Bolotin-Fukuhara M."/>
            <person name="Thierry A."/>
            <person name="Bouchier C."/>
            <person name="Caudron B."/>
            <person name="Scarpelli C."/>
            <person name="Gaillardin C."/>
            <person name="Weissenbach J."/>
            <person name="Wincker P."/>
            <person name="Souciet J.-L."/>
        </authorList>
    </citation>
    <scope>NUCLEOTIDE SEQUENCE [LARGE SCALE GENOMIC DNA]</scope>
    <source>
        <strain>CLIB 122 / E 150</strain>
    </source>
</reference>
<keyword id="KW-0158">Chromosome</keyword>
<keyword id="KW-0963">Cytoplasm</keyword>
<keyword id="KW-0489">Methyltransferase</keyword>
<keyword id="KW-0539">Nucleus</keyword>
<keyword id="KW-1185">Reference proteome</keyword>
<keyword id="KW-0949">S-adenosyl-L-methionine</keyword>
<keyword id="KW-0808">Transferase</keyword>
<accession>Q6C9E7</accession>
<feature type="chain" id="PRO_0000324474" description="Histone-lysine N-methyltransferase SET5">
    <location>
        <begin position="1"/>
        <end position="438"/>
    </location>
</feature>
<feature type="domain" description="SET" evidence="2">
    <location>
        <begin position="107"/>
        <end position="360"/>
    </location>
</feature>
<feature type="region of interest" description="Disordered" evidence="3">
    <location>
        <begin position="409"/>
        <end position="438"/>
    </location>
</feature>
<feature type="compositionally biased region" description="Basic and acidic residues" evidence="3">
    <location>
        <begin position="409"/>
        <end position="419"/>
    </location>
</feature>
<feature type="compositionally biased region" description="Basic and acidic residues" evidence="3">
    <location>
        <begin position="428"/>
        <end position="438"/>
    </location>
</feature>
<organism>
    <name type="scientific">Yarrowia lipolytica (strain CLIB 122 / E 150)</name>
    <name type="common">Yeast</name>
    <name type="synonym">Candida lipolytica</name>
    <dbReference type="NCBI Taxonomy" id="284591"/>
    <lineage>
        <taxon>Eukaryota</taxon>
        <taxon>Fungi</taxon>
        <taxon>Dikarya</taxon>
        <taxon>Ascomycota</taxon>
        <taxon>Saccharomycotina</taxon>
        <taxon>Dipodascomycetes</taxon>
        <taxon>Dipodascales</taxon>
        <taxon>Dipodascales incertae sedis</taxon>
        <taxon>Yarrowia</taxon>
    </lineage>
</organism>
<sequence length="438" mass="50808">MLGLRDVCFDPMLSSYDYHPISLMSTVPNDREIVQAVVDIWRKDKATEKLGAAKLTGLVKLTHSDWQLSEKRVKTVMKAANLGLNQEKFCYAGSIMSHATPGLDMPEKVTLNIAKNRGKGLYAKKDIKKDEELWNEQAFLLVPPLEHVGIMRKGMGCAFCSRPFQSHNGVECPSCAAKWCDNQCKKKDVTHVAMWHESRHGKVTRVEWRAFEDFCVENGWMALYALGLLWLRVIRDPKKDEVQKQMMAFARVGQDERHKAVEQSNSLFASEQSEVLWKKGYEMLDKLLLDTEFSYEKDFLPGLGMFNINNVDGNMYLTQSHLNHSCEPNVDVKNVGRTQGISVRAKRDIKTGEELFTTYVNPEHQLDDRRYNLRVNWGFNCNCTRCKREEREEMEYLDELVSNWTIEHKRKEMKEEKKERTRTRTRSVHFDKEPEVVA</sequence>
<gene>
    <name type="primary">SET5</name>
    <name type="ordered locus">YALI0D11792g</name>
</gene>
<evidence type="ECO:0000250" key="1">
    <source>
        <dbReference type="UniProtKB" id="P38890"/>
    </source>
</evidence>
<evidence type="ECO:0000255" key="2">
    <source>
        <dbReference type="PROSITE-ProRule" id="PRU00190"/>
    </source>
</evidence>
<evidence type="ECO:0000256" key="3">
    <source>
        <dbReference type="SAM" id="MobiDB-lite"/>
    </source>
</evidence>